<protein>
    <recommendedName>
        <fullName evidence="1">3-aminoacrylate deaminase RutC</fullName>
        <shortName evidence="1">3-AA deaminase</shortName>
        <ecNumber evidence="1">3.5.-.-</ecNumber>
    </recommendedName>
</protein>
<proteinExistence type="inferred from homology"/>
<organism>
    <name type="scientific">Escherichia coli O150:H5 (strain SE15)</name>
    <dbReference type="NCBI Taxonomy" id="431946"/>
    <lineage>
        <taxon>Bacteria</taxon>
        <taxon>Pseudomonadati</taxon>
        <taxon>Pseudomonadota</taxon>
        <taxon>Gammaproteobacteria</taxon>
        <taxon>Enterobacterales</taxon>
        <taxon>Enterobacteriaceae</taxon>
        <taxon>Escherichia</taxon>
    </lineage>
</organism>
<comment type="function">
    <text evidence="1">Involved in pyrimidine catabolism. Catalyzes the deamination of 3-aminoacrylate to malonic semialdehyde, a reaction that can also occur spontaneously. RutC may facilitate the reaction and modulate the metabolic fitness, rather than catalyzing essential functions.</text>
</comment>
<comment type="catalytic activity">
    <reaction evidence="1">
        <text>(Z)-3-aminoacrylate + H2O + H(+) = 3-oxopropanoate + NH4(+)</text>
        <dbReference type="Rhea" id="RHEA:34947"/>
        <dbReference type="ChEBI" id="CHEBI:15377"/>
        <dbReference type="ChEBI" id="CHEBI:15378"/>
        <dbReference type="ChEBI" id="CHEBI:28938"/>
        <dbReference type="ChEBI" id="CHEBI:33190"/>
        <dbReference type="ChEBI" id="CHEBI:59894"/>
    </reaction>
</comment>
<comment type="subunit">
    <text evidence="1">Homotrimer.</text>
</comment>
<comment type="similarity">
    <text evidence="1">Belongs to the RutC family.</text>
</comment>
<accession>D2NGI7</accession>
<sequence>MPKSVIIPAGSSAPLAPFVPGTLADGVVYVSGTLAFDQHNNVLFADDPKAQTRHVLETIRKVIETAGGTMADVTFNSIFITDWKNYAAINEIYAEFFPGDKPARFCIQCGLVKPDALVEIATIAHIAK</sequence>
<feature type="chain" id="PRO_0000402736" description="3-aminoacrylate deaminase RutC">
    <location>
        <begin position="1"/>
        <end position="128"/>
    </location>
</feature>
<gene>
    <name evidence="1" type="primary">rutC</name>
    <name type="ordered locus">ECSF_0916</name>
</gene>
<reference key="1">
    <citation type="journal article" date="2010" name="J. Bacteriol.">
        <title>Complete genome sequence of the wild-type commensal Escherichia coli strain SE15, belonging to phylogenetic group B2.</title>
        <authorList>
            <person name="Toh H."/>
            <person name="Oshima K."/>
            <person name="Toyoda A."/>
            <person name="Ogura Y."/>
            <person name="Ooka T."/>
            <person name="Sasamoto H."/>
            <person name="Park S.H."/>
            <person name="Iyoda S."/>
            <person name="Kurokawa K."/>
            <person name="Morita H."/>
            <person name="Itoh K."/>
            <person name="Taylor T.D."/>
            <person name="Hayashi T."/>
            <person name="Hattori M."/>
        </authorList>
    </citation>
    <scope>NUCLEOTIDE SEQUENCE [LARGE SCALE GENOMIC DNA]</scope>
    <source>
        <strain>SE15</strain>
    </source>
</reference>
<name>RUTC_ECOS5</name>
<dbReference type="EC" id="3.5.-.-" evidence="1"/>
<dbReference type="EMBL" id="AP009378">
    <property type="protein sequence ID" value="BAI54456.1"/>
    <property type="molecule type" value="Genomic_DNA"/>
</dbReference>
<dbReference type="RefSeq" id="WP_001126780.1">
    <property type="nucleotide sequence ID" value="NC_013654.1"/>
</dbReference>
<dbReference type="SMR" id="D2NGI7"/>
<dbReference type="GeneID" id="75171086"/>
<dbReference type="KEGG" id="ese:ECSF_0916"/>
<dbReference type="PATRIC" id="fig|431946.3.peg.960"/>
<dbReference type="HOGENOM" id="CLU_100715_7_3_6"/>
<dbReference type="GO" id="GO:0005829">
    <property type="term" value="C:cytosol"/>
    <property type="evidence" value="ECO:0007669"/>
    <property type="project" value="TreeGrafter"/>
</dbReference>
<dbReference type="GO" id="GO:0019239">
    <property type="term" value="F:deaminase activity"/>
    <property type="evidence" value="ECO:0007669"/>
    <property type="project" value="TreeGrafter"/>
</dbReference>
<dbReference type="GO" id="GO:0019740">
    <property type="term" value="P:nitrogen utilization"/>
    <property type="evidence" value="ECO:0007669"/>
    <property type="project" value="UniProtKB-UniRule"/>
</dbReference>
<dbReference type="GO" id="GO:0006212">
    <property type="term" value="P:uracil catabolic process"/>
    <property type="evidence" value="ECO:0007669"/>
    <property type="project" value="UniProtKB-UniRule"/>
</dbReference>
<dbReference type="CDD" id="cd00448">
    <property type="entry name" value="YjgF_YER057c_UK114_family"/>
    <property type="match status" value="1"/>
</dbReference>
<dbReference type="FunFam" id="3.30.1330.40:FF:000003">
    <property type="entry name" value="Putative aminoacrylate peracid reductase RutC"/>
    <property type="match status" value="1"/>
</dbReference>
<dbReference type="Gene3D" id="3.30.1330.40">
    <property type="entry name" value="RutC-like"/>
    <property type="match status" value="1"/>
</dbReference>
<dbReference type="HAMAP" id="MF_00831">
    <property type="entry name" value="RutC"/>
    <property type="match status" value="1"/>
</dbReference>
<dbReference type="InterPro" id="IPR019897">
    <property type="entry name" value="RidA_CS"/>
</dbReference>
<dbReference type="InterPro" id="IPR019898">
    <property type="entry name" value="RutC"/>
</dbReference>
<dbReference type="InterPro" id="IPR035959">
    <property type="entry name" value="RutC-like_sf"/>
</dbReference>
<dbReference type="InterPro" id="IPR006175">
    <property type="entry name" value="YjgF/YER057c/UK114"/>
</dbReference>
<dbReference type="NCBIfam" id="TIGR03610">
    <property type="entry name" value="RutC"/>
    <property type="match status" value="1"/>
</dbReference>
<dbReference type="PANTHER" id="PTHR11803">
    <property type="entry name" value="2-IMINOBUTANOATE/2-IMINOPROPANOATE DEAMINASE RIDA"/>
    <property type="match status" value="1"/>
</dbReference>
<dbReference type="PANTHER" id="PTHR11803:SF58">
    <property type="entry name" value="PROTEIN HMF1-RELATED"/>
    <property type="match status" value="1"/>
</dbReference>
<dbReference type="Pfam" id="PF01042">
    <property type="entry name" value="Ribonuc_L-PSP"/>
    <property type="match status" value="1"/>
</dbReference>
<dbReference type="SUPFAM" id="SSF55298">
    <property type="entry name" value="YjgF-like"/>
    <property type="match status" value="1"/>
</dbReference>
<dbReference type="PROSITE" id="PS01094">
    <property type="entry name" value="UPF0076"/>
    <property type="match status" value="1"/>
</dbReference>
<evidence type="ECO:0000255" key="1">
    <source>
        <dbReference type="HAMAP-Rule" id="MF_00831"/>
    </source>
</evidence>
<keyword id="KW-0378">Hydrolase</keyword>